<proteinExistence type="evidence at protein level"/>
<comment type="function">
    <text evidence="3">Specifically acetylates 'Lys-40' in alpha-tubulin on the lumenal side of microtubules. Promotes microtubule destabilization and accelerates microtubule dynamics; this activity may be independent of acetylation activity. Acetylates alpha-tubulin with a slow enzymatic rate, due to a catalytic site that is not optimized for acetyl transfer. Enters the microtubule through each end and diffuses quickly throughout the lumen of microtubules. Acetylates only long/old microtubules because of its slow acetylation rate since it does not have time to act on dynamically unstable microtubules before the enzyme is released. Required for normal sperm flagellar function. Promotes directional cell locomotion and chemotaxis, through AP2A2-dependent acetylation of alpha-tubulin at clathrin-coated pits that are concentrated at the leading edge of migrating cells. May facilitate primary cilium assembly.</text>
</comment>
<comment type="catalytic activity">
    <reaction evidence="3">
        <text>L-lysyl-[alpha-tubulin] + acetyl-CoA = N(6)-acetyl-L-lysyl-[alpha-tubulin] + CoA + H(+)</text>
        <dbReference type="Rhea" id="RHEA:15277"/>
        <dbReference type="Rhea" id="RHEA-COMP:11278"/>
        <dbReference type="Rhea" id="RHEA-COMP:11279"/>
        <dbReference type="ChEBI" id="CHEBI:15378"/>
        <dbReference type="ChEBI" id="CHEBI:29969"/>
        <dbReference type="ChEBI" id="CHEBI:57287"/>
        <dbReference type="ChEBI" id="CHEBI:57288"/>
        <dbReference type="ChEBI" id="CHEBI:61930"/>
        <dbReference type="EC" id="2.3.1.108"/>
    </reaction>
</comment>
<comment type="subunit">
    <text evidence="3">Component of the BBSome complex. Interacts with AP2 alpha-adaptins, including AP2A2, but not with AP1 gamma-adaptin (AP1G1/AP1G2); this interaction is required for efficient alpha-tubulin acetylation, hence clathrin-coated pits are sites of microtubule acetylation.</text>
</comment>
<comment type="subcellular location">
    <subcellularLocation>
        <location evidence="3">Cytoplasm</location>
    </subcellularLocation>
    <subcellularLocation>
        <location evidence="3">Membrane</location>
        <location evidence="3">Clathrin-coated pit</location>
    </subcellularLocation>
    <subcellularLocation>
        <location evidence="3">Cell junction</location>
        <location evidence="3">Focal adhesion</location>
    </subcellularLocation>
    <subcellularLocation>
        <location evidence="3">Cell projection</location>
        <location evidence="3">Axon</location>
    </subcellularLocation>
    <subcellularLocation>
        <location evidence="3">Cytoplasm</location>
        <location evidence="3">Cytoskeleton</location>
    </subcellularLocation>
    <subcellularLocation>
        <location evidence="3">Cytoplasm</location>
        <location evidence="3">Cytoskeleton</location>
        <location evidence="3">Spindle</location>
    </subcellularLocation>
</comment>
<comment type="PTM">
    <text evidence="3">Autoacetylation strongly increases tubulin acetylation.</text>
</comment>
<comment type="similarity">
    <text evidence="3">Belongs to the acetyltransferase ATAT1 family.</text>
</comment>
<organism>
    <name type="scientific">Rattus norvegicus</name>
    <name type="common">Rat</name>
    <dbReference type="NCBI Taxonomy" id="10116"/>
    <lineage>
        <taxon>Eukaryota</taxon>
        <taxon>Metazoa</taxon>
        <taxon>Chordata</taxon>
        <taxon>Craniata</taxon>
        <taxon>Vertebrata</taxon>
        <taxon>Euteleostomi</taxon>
        <taxon>Mammalia</taxon>
        <taxon>Eutheria</taxon>
        <taxon>Euarchontoglires</taxon>
        <taxon>Glires</taxon>
        <taxon>Rodentia</taxon>
        <taxon>Myomorpha</taxon>
        <taxon>Muroidea</taxon>
        <taxon>Muridae</taxon>
        <taxon>Murinae</taxon>
        <taxon>Rattus</taxon>
    </lineage>
</organism>
<protein>
    <recommendedName>
        <fullName evidence="3">Alpha-tubulin N-acetyltransferase 1</fullName>
        <shortName evidence="3">Alpha-TAT</shortName>
        <shortName evidence="3">Alpha-TAT1</shortName>
        <shortName evidence="3">TAT</shortName>
        <ecNumber evidence="3">2.3.1.108</ecNumber>
    </recommendedName>
    <alternativeName>
        <fullName evidence="3">Acetyltransferase mec-17 homolog</fullName>
    </alternativeName>
</protein>
<reference evidence="5" key="1">
    <citation type="journal article" date="2004" name="Genome Res.">
        <title>The genomic sequence and comparative analysis of the rat major histocompatibility complex.</title>
        <authorList>
            <person name="Hurt P."/>
            <person name="Walter L."/>
            <person name="Sudbrak R."/>
            <person name="Klages S."/>
            <person name="Mueller I."/>
            <person name="Shiina T."/>
            <person name="Inoko H."/>
            <person name="Lehrach H."/>
            <person name="Guenther E."/>
            <person name="Reinhardt R."/>
            <person name="Himmelbauer H."/>
        </authorList>
    </citation>
    <scope>NUCLEOTIDE SEQUENCE [LARGE SCALE GENOMIC DNA]</scope>
    <source>
        <strain evidence="5">Brown Norway</strain>
    </source>
</reference>
<reference key="2">
    <citation type="journal article" date="2012" name="Nat. Commun.">
        <title>Quantitative maps of protein phosphorylation sites across 14 different rat organs and tissues.</title>
        <authorList>
            <person name="Lundby A."/>
            <person name="Secher A."/>
            <person name="Lage K."/>
            <person name="Nordsborg N.B."/>
            <person name="Dmytriyev A."/>
            <person name="Lundby C."/>
            <person name="Olsen J.V."/>
        </authorList>
    </citation>
    <scope>PHOSPHORYLATION [LARGE SCALE ANALYSIS] AT SER-272; SER-276 AND SER-315</scope>
    <scope>IDENTIFICATION BY MASS SPECTROMETRY [LARGE SCALE ANALYSIS]</scope>
</reference>
<dbReference type="EC" id="2.3.1.108" evidence="3"/>
<dbReference type="EMBL" id="BX883048">
    <property type="protein sequence ID" value="CAE84036.1"/>
    <property type="molecule type" value="Genomic_DNA"/>
</dbReference>
<dbReference type="RefSeq" id="NP_997663.1">
    <property type="nucleotide sequence ID" value="NM_212498.1"/>
</dbReference>
<dbReference type="SMR" id="Q6MG11"/>
<dbReference type="FunCoup" id="Q6MG11">
    <property type="interactions" value="1363"/>
</dbReference>
<dbReference type="STRING" id="10116.ENSRNOP00000001065"/>
<dbReference type="iPTMnet" id="Q6MG11"/>
<dbReference type="PhosphoSitePlus" id="Q6MG11"/>
<dbReference type="jPOST" id="Q6MG11"/>
<dbReference type="PaxDb" id="10116-ENSRNOP00000001065"/>
<dbReference type="ABCD" id="Q6MG11">
    <property type="antibodies" value="1 sequenced antibody"/>
</dbReference>
<dbReference type="GeneID" id="361789"/>
<dbReference type="KEGG" id="rno:361789"/>
<dbReference type="UCSC" id="RGD:1303066">
    <property type="organism name" value="rat"/>
</dbReference>
<dbReference type="AGR" id="RGD:1303066"/>
<dbReference type="CTD" id="79969"/>
<dbReference type="RGD" id="1303066">
    <property type="gene designation" value="Atat1"/>
</dbReference>
<dbReference type="VEuPathDB" id="HostDB:ENSRNOG00000000809"/>
<dbReference type="eggNOG" id="KOG4601">
    <property type="taxonomic scope" value="Eukaryota"/>
</dbReference>
<dbReference type="InParanoid" id="Q6MG11"/>
<dbReference type="PhylomeDB" id="Q6MG11"/>
<dbReference type="TreeFam" id="TF315643"/>
<dbReference type="Reactome" id="R-RNO-5617833">
    <property type="pathway name" value="Cilium Assembly"/>
</dbReference>
<dbReference type="PRO" id="PR:Q6MG11"/>
<dbReference type="Proteomes" id="UP000002494">
    <property type="component" value="Chromosome 20"/>
</dbReference>
<dbReference type="Bgee" id="ENSRNOG00000000809">
    <property type="expression patterns" value="Expressed in ovary and 19 other cell types or tissues"/>
</dbReference>
<dbReference type="ExpressionAtlas" id="Q6MG11">
    <property type="expression patterns" value="baseline and differential"/>
</dbReference>
<dbReference type="GO" id="GO:0030424">
    <property type="term" value="C:axon"/>
    <property type="evidence" value="ECO:0007669"/>
    <property type="project" value="UniProtKB-SubCell"/>
</dbReference>
<dbReference type="GO" id="GO:0005905">
    <property type="term" value="C:clathrin-coated pit"/>
    <property type="evidence" value="ECO:0007669"/>
    <property type="project" value="UniProtKB-SubCell"/>
</dbReference>
<dbReference type="GO" id="GO:0005737">
    <property type="term" value="C:cytoplasm"/>
    <property type="evidence" value="ECO:0007669"/>
    <property type="project" value="UniProtKB-SubCell"/>
</dbReference>
<dbReference type="GO" id="GO:0005925">
    <property type="term" value="C:focal adhesion"/>
    <property type="evidence" value="ECO:0007669"/>
    <property type="project" value="UniProtKB-SubCell"/>
</dbReference>
<dbReference type="GO" id="GO:0016020">
    <property type="term" value="C:membrane"/>
    <property type="evidence" value="ECO:0000266"/>
    <property type="project" value="RGD"/>
</dbReference>
<dbReference type="GO" id="GO:0005874">
    <property type="term" value="C:microtubule"/>
    <property type="evidence" value="ECO:0007669"/>
    <property type="project" value="InterPro"/>
</dbReference>
<dbReference type="GO" id="GO:0097427">
    <property type="term" value="C:microtubule bundle"/>
    <property type="evidence" value="ECO:0000266"/>
    <property type="project" value="RGD"/>
</dbReference>
<dbReference type="GO" id="GO:0072686">
    <property type="term" value="C:mitotic spindle"/>
    <property type="evidence" value="ECO:0000266"/>
    <property type="project" value="RGD"/>
</dbReference>
<dbReference type="GO" id="GO:0016407">
    <property type="term" value="F:acetyltransferase activity"/>
    <property type="evidence" value="ECO:0000266"/>
    <property type="project" value="RGD"/>
</dbReference>
<dbReference type="GO" id="GO:0004468">
    <property type="term" value="F:L-lysine N-acetyltransferase activity, acting on acetyl phosphate as donor"/>
    <property type="evidence" value="ECO:0000250"/>
    <property type="project" value="UniProtKB"/>
</dbReference>
<dbReference type="GO" id="GO:0019799">
    <property type="term" value="F:tubulin N-acetyltransferase activity"/>
    <property type="evidence" value="ECO:0000250"/>
    <property type="project" value="UniProtKB"/>
</dbReference>
<dbReference type="GO" id="GO:0071929">
    <property type="term" value="P:alpha-tubulin acetylation"/>
    <property type="evidence" value="ECO:0000250"/>
    <property type="project" value="UniProtKB"/>
</dbReference>
<dbReference type="GO" id="GO:0021542">
    <property type="term" value="P:dentate gyrus development"/>
    <property type="evidence" value="ECO:0000266"/>
    <property type="project" value="RGD"/>
</dbReference>
<dbReference type="GO" id="GO:0000226">
    <property type="term" value="P:microtubule cytoskeleton organization"/>
    <property type="evidence" value="ECO:0000266"/>
    <property type="project" value="RGD"/>
</dbReference>
<dbReference type="GO" id="GO:0048666">
    <property type="term" value="P:neuron development"/>
    <property type="evidence" value="ECO:0007669"/>
    <property type="project" value="UniProtKB-UniRule"/>
</dbReference>
<dbReference type="GO" id="GO:0044546">
    <property type="term" value="P:NLRP3 inflammasome complex assembly"/>
    <property type="evidence" value="ECO:0000266"/>
    <property type="project" value="RGD"/>
</dbReference>
<dbReference type="GO" id="GO:1900227">
    <property type="term" value="P:positive regulation of NLRP3 inflammasome complex assembly"/>
    <property type="evidence" value="ECO:0000266"/>
    <property type="project" value="RGD"/>
</dbReference>
<dbReference type="GO" id="GO:0045598">
    <property type="term" value="P:regulation of fat cell differentiation"/>
    <property type="evidence" value="ECO:0000266"/>
    <property type="project" value="RGD"/>
</dbReference>
<dbReference type="GO" id="GO:0070507">
    <property type="term" value="P:regulation of microtubule cytoskeleton organization"/>
    <property type="evidence" value="ECO:0007669"/>
    <property type="project" value="UniProtKB-UniRule"/>
</dbReference>
<dbReference type="GO" id="GO:0009612">
    <property type="term" value="P:response to mechanical stimulus"/>
    <property type="evidence" value="ECO:0000266"/>
    <property type="project" value="RGD"/>
</dbReference>
<dbReference type="GO" id="GO:0048265">
    <property type="term" value="P:response to pain"/>
    <property type="evidence" value="ECO:0000266"/>
    <property type="project" value="RGD"/>
</dbReference>
<dbReference type="GO" id="GO:0007283">
    <property type="term" value="P:spermatogenesis"/>
    <property type="evidence" value="ECO:0000266"/>
    <property type="project" value="RGD"/>
</dbReference>
<dbReference type="CDD" id="cd04301">
    <property type="entry name" value="NAT_SF"/>
    <property type="match status" value="1"/>
</dbReference>
<dbReference type="FunFam" id="3.40.630.30:FF:000060">
    <property type="entry name" value="Alpha-tubulin N-acetyltransferase 1"/>
    <property type="match status" value="1"/>
</dbReference>
<dbReference type="Gene3D" id="3.40.630.30">
    <property type="match status" value="1"/>
</dbReference>
<dbReference type="Gene3D" id="6.20.370.120">
    <property type="match status" value="1"/>
</dbReference>
<dbReference type="HAMAP" id="MF_03130">
    <property type="entry name" value="mec17"/>
    <property type="match status" value="1"/>
</dbReference>
<dbReference type="InterPro" id="IPR038746">
    <property type="entry name" value="Atat"/>
</dbReference>
<dbReference type="InterPro" id="IPR007965">
    <property type="entry name" value="GNAT_ATAT"/>
</dbReference>
<dbReference type="PANTHER" id="PTHR12327">
    <property type="entry name" value="ALPHA-TUBULIN N-ACETYLTRANSFERASE 1"/>
    <property type="match status" value="1"/>
</dbReference>
<dbReference type="PANTHER" id="PTHR12327:SF0">
    <property type="entry name" value="ALPHA-TUBULIN N-ACETYLTRANSFERASE 1"/>
    <property type="match status" value="1"/>
</dbReference>
<dbReference type="Pfam" id="PF05301">
    <property type="entry name" value="Acetyltransf_16"/>
    <property type="match status" value="1"/>
</dbReference>
<dbReference type="PROSITE" id="PS51730">
    <property type="entry name" value="GNAT_ATAT"/>
    <property type="match status" value="1"/>
</dbReference>
<gene>
    <name evidence="3" type="primary">Atat1</name>
    <name type="synonym">Mec17</name>
</gene>
<evidence type="ECO:0000250" key="1">
    <source>
        <dbReference type="UniProtKB" id="Q5SQI0"/>
    </source>
</evidence>
<evidence type="ECO:0000250" key="2">
    <source>
        <dbReference type="UniProtKB" id="Q8K341"/>
    </source>
</evidence>
<evidence type="ECO:0000255" key="3">
    <source>
        <dbReference type="HAMAP-Rule" id="MF_03130"/>
    </source>
</evidence>
<evidence type="ECO:0000256" key="4">
    <source>
        <dbReference type="SAM" id="MobiDB-lite"/>
    </source>
</evidence>
<evidence type="ECO:0000312" key="5">
    <source>
        <dbReference type="EMBL" id="CAE84036.1"/>
    </source>
</evidence>
<evidence type="ECO:0007744" key="6">
    <source>
    </source>
</evidence>
<accession>Q6MG11</accession>
<name>ATAT_RAT</name>
<feature type="chain" id="PRO_0000348068" description="Alpha-tubulin N-acetyltransferase 1">
    <location>
        <begin position="1"/>
        <end position="421"/>
    </location>
</feature>
<feature type="domain" description="N-acetyltransferase" evidence="3">
    <location>
        <begin position="1"/>
        <end position="190"/>
    </location>
</feature>
<feature type="region of interest" description="Disordered" evidence="4">
    <location>
        <begin position="214"/>
        <end position="235"/>
    </location>
</feature>
<feature type="region of interest" description="Disordered" evidence="4">
    <location>
        <begin position="252"/>
        <end position="284"/>
    </location>
</feature>
<feature type="region of interest" description="Disordered" evidence="4">
    <location>
        <begin position="342"/>
        <end position="398"/>
    </location>
</feature>
<feature type="compositionally biased region" description="Basic and acidic residues" evidence="4">
    <location>
        <begin position="226"/>
        <end position="235"/>
    </location>
</feature>
<feature type="compositionally biased region" description="Polar residues" evidence="4">
    <location>
        <begin position="342"/>
        <end position="351"/>
    </location>
</feature>
<feature type="compositionally biased region" description="Basic and acidic residues" evidence="4">
    <location>
        <begin position="352"/>
        <end position="367"/>
    </location>
</feature>
<feature type="binding site" evidence="3">
    <location>
        <begin position="124"/>
        <end position="137"/>
    </location>
    <ligand>
        <name>acetyl-CoA</name>
        <dbReference type="ChEBI" id="CHEBI:57288"/>
    </ligand>
</feature>
<feature type="binding site" evidence="3">
    <location>
        <begin position="160"/>
        <end position="169"/>
    </location>
    <ligand>
        <name>acetyl-CoA</name>
        <dbReference type="ChEBI" id="CHEBI:57288"/>
    </ligand>
</feature>
<feature type="site" description="Crucial for catalytic activity" evidence="3">
    <location>
        <position position="58"/>
    </location>
</feature>
<feature type="modified residue" description="N6-acetyllysine; by autocatalysis" evidence="2 3">
    <location>
        <position position="56"/>
    </location>
</feature>
<feature type="modified residue" description="N6-acetyllysine; by autocatalysis" evidence="2 3">
    <location>
        <position position="146"/>
    </location>
</feature>
<feature type="modified residue" description="N6-acetyllysine; by autocatalysis" evidence="2 3">
    <location>
        <position position="233"/>
    </location>
</feature>
<feature type="modified residue" description="N6-acetyllysine; by autocatalysis" evidence="2 3">
    <location>
        <position position="244"/>
    </location>
</feature>
<feature type="modified residue" description="Phosphoserine" evidence="6">
    <location>
        <position position="272"/>
    </location>
</feature>
<feature type="modified residue" description="Phosphoserine" evidence="6">
    <location>
        <position position="276"/>
    </location>
</feature>
<feature type="modified residue" description="Asymmetric dimethylarginine" evidence="2">
    <location>
        <position position="305"/>
    </location>
</feature>
<feature type="modified residue" description="Phosphoserine" evidence="6">
    <location>
        <position position="315"/>
    </location>
</feature>
<feature type="modified residue" description="Omega-N-methylarginine" evidence="1">
    <location>
        <position position="323"/>
    </location>
</feature>
<sequence length="421" mass="47327">MEFPFDVDALFPERITVLDQHLRPPARRPGTTTPARVDLQQQIMTIVDELGKASAKAQHLPAPITSALRMQSNRHVIYVLKDTSARPAGKGAIIGFLKVGYKKLFVLDDREAHNEVEPLCILDFYIHESVQRHGHGRELFQYMLQKERVEPHQLAIDRPSPKLLKFLNKHYNLETTVPQVNNFVIFEGFFAHQHRSPTPSLRATRHSRAAVVDPIPAAPARKLPPKRAEGDIKPYSSSDREFLKVAVEPPWPLNRAPRRATPPAHPPPRSSSLGNSPDRGPLRPFVPEQELLRSLRLCPPHPTARLLLATDPGGSPAQRRRTRETPWGLVAQSCHYSRHGGFNTSFLGTGNQERKQGEQEAEDRSASEDQVLLQDGSGEEPTHTVAPRAQAPPAQSWMVGGDILNARVIRNLQERRNTRPW</sequence>
<keyword id="KW-0007">Acetylation</keyword>
<keyword id="KW-0012">Acyltransferase</keyword>
<keyword id="KW-0965">Cell junction</keyword>
<keyword id="KW-0966">Cell projection</keyword>
<keyword id="KW-0168">Coated pit</keyword>
<keyword id="KW-0963">Cytoplasm</keyword>
<keyword id="KW-0206">Cytoskeleton</keyword>
<keyword id="KW-0472">Membrane</keyword>
<keyword id="KW-0488">Methylation</keyword>
<keyword id="KW-0597">Phosphoprotein</keyword>
<keyword id="KW-1185">Reference proteome</keyword>
<keyword id="KW-0808">Transferase</keyword>